<dbReference type="EC" id="6.1.1.12" evidence="1"/>
<dbReference type="EMBL" id="BX571866">
    <property type="protein sequence ID" value="CAE14400.1"/>
    <property type="molecule type" value="Genomic_DNA"/>
</dbReference>
<dbReference type="RefSeq" id="WP_011146361.1">
    <property type="nucleotide sequence ID" value="NC_005126.1"/>
</dbReference>
<dbReference type="SMR" id="Q7MB41"/>
<dbReference type="STRING" id="243265.plu2107"/>
<dbReference type="GeneID" id="48848386"/>
<dbReference type="KEGG" id="plu:plu2107"/>
<dbReference type="eggNOG" id="COG0173">
    <property type="taxonomic scope" value="Bacteria"/>
</dbReference>
<dbReference type="HOGENOM" id="CLU_014330_3_2_6"/>
<dbReference type="OrthoDB" id="9802326at2"/>
<dbReference type="Proteomes" id="UP000002514">
    <property type="component" value="Chromosome"/>
</dbReference>
<dbReference type="GO" id="GO:0005737">
    <property type="term" value="C:cytoplasm"/>
    <property type="evidence" value="ECO:0007669"/>
    <property type="project" value="UniProtKB-SubCell"/>
</dbReference>
<dbReference type="GO" id="GO:0004815">
    <property type="term" value="F:aspartate-tRNA ligase activity"/>
    <property type="evidence" value="ECO:0007669"/>
    <property type="project" value="UniProtKB-UniRule"/>
</dbReference>
<dbReference type="GO" id="GO:0005524">
    <property type="term" value="F:ATP binding"/>
    <property type="evidence" value="ECO:0007669"/>
    <property type="project" value="UniProtKB-UniRule"/>
</dbReference>
<dbReference type="GO" id="GO:0003676">
    <property type="term" value="F:nucleic acid binding"/>
    <property type="evidence" value="ECO:0007669"/>
    <property type="project" value="InterPro"/>
</dbReference>
<dbReference type="GO" id="GO:0006422">
    <property type="term" value="P:aspartyl-tRNA aminoacylation"/>
    <property type="evidence" value="ECO:0007669"/>
    <property type="project" value="UniProtKB-UniRule"/>
</dbReference>
<dbReference type="CDD" id="cd00777">
    <property type="entry name" value="AspRS_core"/>
    <property type="match status" value="1"/>
</dbReference>
<dbReference type="CDD" id="cd04317">
    <property type="entry name" value="EcAspRS_like_N"/>
    <property type="match status" value="1"/>
</dbReference>
<dbReference type="FunFam" id="2.40.50.140:FF:000080">
    <property type="entry name" value="Aspartate--tRNA ligase"/>
    <property type="match status" value="1"/>
</dbReference>
<dbReference type="Gene3D" id="3.30.930.10">
    <property type="entry name" value="Bira Bifunctional Protein, Domain 2"/>
    <property type="match status" value="1"/>
</dbReference>
<dbReference type="Gene3D" id="3.30.1360.30">
    <property type="entry name" value="GAD-like domain"/>
    <property type="match status" value="1"/>
</dbReference>
<dbReference type="Gene3D" id="2.40.50.140">
    <property type="entry name" value="Nucleic acid-binding proteins"/>
    <property type="match status" value="1"/>
</dbReference>
<dbReference type="HAMAP" id="MF_00044">
    <property type="entry name" value="Asp_tRNA_synth_type1"/>
    <property type="match status" value="1"/>
</dbReference>
<dbReference type="InterPro" id="IPR004364">
    <property type="entry name" value="Aa-tRNA-synt_II"/>
</dbReference>
<dbReference type="InterPro" id="IPR006195">
    <property type="entry name" value="aa-tRNA-synth_II"/>
</dbReference>
<dbReference type="InterPro" id="IPR045864">
    <property type="entry name" value="aa-tRNA-synth_II/BPL/LPL"/>
</dbReference>
<dbReference type="InterPro" id="IPR004524">
    <property type="entry name" value="Asp-tRNA-ligase_1"/>
</dbReference>
<dbReference type="InterPro" id="IPR047089">
    <property type="entry name" value="Asp-tRNA-ligase_1_N"/>
</dbReference>
<dbReference type="InterPro" id="IPR002312">
    <property type="entry name" value="Asp/Asn-tRNA-synth_IIb"/>
</dbReference>
<dbReference type="InterPro" id="IPR047090">
    <property type="entry name" value="AspRS_core"/>
</dbReference>
<dbReference type="InterPro" id="IPR004115">
    <property type="entry name" value="GAD-like_sf"/>
</dbReference>
<dbReference type="InterPro" id="IPR029351">
    <property type="entry name" value="GAD_dom"/>
</dbReference>
<dbReference type="InterPro" id="IPR012340">
    <property type="entry name" value="NA-bd_OB-fold"/>
</dbReference>
<dbReference type="InterPro" id="IPR004365">
    <property type="entry name" value="NA-bd_OB_tRNA"/>
</dbReference>
<dbReference type="NCBIfam" id="TIGR00459">
    <property type="entry name" value="aspS_bact"/>
    <property type="match status" value="1"/>
</dbReference>
<dbReference type="NCBIfam" id="NF001750">
    <property type="entry name" value="PRK00476.1"/>
    <property type="match status" value="1"/>
</dbReference>
<dbReference type="PANTHER" id="PTHR22594:SF5">
    <property type="entry name" value="ASPARTATE--TRNA LIGASE, MITOCHONDRIAL"/>
    <property type="match status" value="1"/>
</dbReference>
<dbReference type="PANTHER" id="PTHR22594">
    <property type="entry name" value="ASPARTYL/LYSYL-TRNA SYNTHETASE"/>
    <property type="match status" value="1"/>
</dbReference>
<dbReference type="Pfam" id="PF02938">
    <property type="entry name" value="GAD"/>
    <property type="match status" value="1"/>
</dbReference>
<dbReference type="Pfam" id="PF00152">
    <property type="entry name" value="tRNA-synt_2"/>
    <property type="match status" value="1"/>
</dbReference>
<dbReference type="Pfam" id="PF01336">
    <property type="entry name" value="tRNA_anti-codon"/>
    <property type="match status" value="1"/>
</dbReference>
<dbReference type="PRINTS" id="PR01042">
    <property type="entry name" value="TRNASYNTHASP"/>
</dbReference>
<dbReference type="SUPFAM" id="SSF55681">
    <property type="entry name" value="Class II aaRS and biotin synthetases"/>
    <property type="match status" value="1"/>
</dbReference>
<dbReference type="SUPFAM" id="SSF55261">
    <property type="entry name" value="GAD domain-like"/>
    <property type="match status" value="1"/>
</dbReference>
<dbReference type="SUPFAM" id="SSF50249">
    <property type="entry name" value="Nucleic acid-binding proteins"/>
    <property type="match status" value="1"/>
</dbReference>
<dbReference type="PROSITE" id="PS50862">
    <property type="entry name" value="AA_TRNA_LIGASE_II"/>
    <property type="match status" value="1"/>
</dbReference>
<proteinExistence type="inferred from homology"/>
<protein>
    <recommendedName>
        <fullName evidence="1">Aspartate--tRNA ligase</fullName>
        <ecNumber evidence="1">6.1.1.12</ecNumber>
    </recommendedName>
    <alternativeName>
        <fullName evidence="1">Aspartyl-tRNA synthetase</fullName>
        <shortName evidence="1">AspRS</shortName>
    </alternativeName>
</protein>
<accession>Q7MB41</accession>
<comment type="function">
    <text evidence="1">Catalyzes the attachment of L-aspartate to tRNA(Asp) in a two-step reaction: L-aspartate is first activated by ATP to form Asp-AMP and then transferred to the acceptor end of tRNA(Asp).</text>
</comment>
<comment type="catalytic activity">
    <reaction evidence="1">
        <text>tRNA(Asp) + L-aspartate + ATP = L-aspartyl-tRNA(Asp) + AMP + diphosphate</text>
        <dbReference type="Rhea" id="RHEA:19649"/>
        <dbReference type="Rhea" id="RHEA-COMP:9660"/>
        <dbReference type="Rhea" id="RHEA-COMP:9678"/>
        <dbReference type="ChEBI" id="CHEBI:29991"/>
        <dbReference type="ChEBI" id="CHEBI:30616"/>
        <dbReference type="ChEBI" id="CHEBI:33019"/>
        <dbReference type="ChEBI" id="CHEBI:78442"/>
        <dbReference type="ChEBI" id="CHEBI:78516"/>
        <dbReference type="ChEBI" id="CHEBI:456215"/>
        <dbReference type="EC" id="6.1.1.12"/>
    </reaction>
</comment>
<comment type="subunit">
    <text evidence="1">Homodimer.</text>
</comment>
<comment type="subcellular location">
    <subcellularLocation>
        <location evidence="1">Cytoplasm</location>
    </subcellularLocation>
</comment>
<comment type="similarity">
    <text evidence="1">Belongs to the class-II aminoacyl-tRNA synthetase family. Type 1 subfamily.</text>
</comment>
<organism>
    <name type="scientific">Photorhabdus laumondii subsp. laumondii (strain DSM 15139 / CIP 105565 / TT01)</name>
    <name type="common">Photorhabdus luminescens subsp. laumondii</name>
    <dbReference type="NCBI Taxonomy" id="243265"/>
    <lineage>
        <taxon>Bacteria</taxon>
        <taxon>Pseudomonadati</taxon>
        <taxon>Pseudomonadota</taxon>
        <taxon>Gammaproteobacteria</taxon>
        <taxon>Enterobacterales</taxon>
        <taxon>Morganellaceae</taxon>
        <taxon>Photorhabdus</taxon>
    </lineage>
</organism>
<sequence length="590" mass="66229">MRTDYCGQLNLTHEGQKVTLCGWVNRRRDLGGLIFIDMRDREGIVQVFFDPDQQAAFSQAAELRNEFCIQITGTVRARPDSQINKDMATGEIEVFAESLNIINRSEPLPLDSNQTNSEEQRLKYRYIDLRRPEMANRLKTRAKITSFVRRFMDNQGFLDIETPMLTKATPEGARDYLVPSRVHKGKFYALPQSPQLFKQLLMMSGFDRYYQIVKCFRDEDLRADRQPEFTQIDVETSFMTAEQVREMMEKMIRELWFEIDGVDLGHFPVMTFAEVMRRFGSDKPDLRNPLELVDVADLVKDVEFSVFAEPANDSKGRVAVIRVPGGAELSRKQIDEYGKFVGIYGAKGLAWIKVNARAAGLEGVQSPIAKFLNAEVIEGLLSRTDAQDGDILFFGAGSVKVVTDALGALRLKLGRDLNLTKLDSWRPLWVIDFPMFEDDGEGGLTAMHHPFTSPCNMSAAELAQDPVSAIANAYDMVINGYEVGGGSVRIHRNEMQQAVFRILGINEQEQQEKFGFLLDALKFGTPPHAGLAFGLDRLVMLLTGTDNIRDVIAFPKTTAAACLMTEAPSYANPASLEELSISVVAKKESE</sequence>
<name>SYD_PHOLL</name>
<evidence type="ECO:0000255" key="1">
    <source>
        <dbReference type="HAMAP-Rule" id="MF_00044"/>
    </source>
</evidence>
<reference key="1">
    <citation type="journal article" date="2003" name="Nat. Biotechnol.">
        <title>The genome sequence of the entomopathogenic bacterium Photorhabdus luminescens.</title>
        <authorList>
            <person name="Duchaud E."/>
            <person name="Rusniok C."/>
            <person name="Frangeul L."/>
            <person name="Buchrieser C."/>
            <person name="Givaudan A."/>
            <person name="Taourit S."/>
            <person name="Bocs S."/>
            <person name="Boursaux-Eude C."/>
            <person name="Chandler M."/>
            <person name="Charles J.-F."/>
            <person name="Dassa E."/>
            <person name="Derose R."/>
            <person name="Derzelle S."/>
            <person name="Freyssinet G."/>
            <person name="Gaudriault S."/>
            <person name="Medigue C."/>
            <person name="Lanois A."/>
            <person name="Powell K."/>
            <person name="Siguier P."/>
            <person name="Vincent R."/>
            <person name="Wingate V."/>
            <person name="Zouine M."/>
            <person name="Glaser P."/>
            <person name="Boemare N."/>
            <person name="Danchin A."/>
            <person name="Kunst F."/>
        </authorList>
    </citation>
    <scope>NUCLEOTIDE SEQUENCE [LARGE SCALE GENOMIC DNA]</scope>
    <source>
        <strain>DSM 15139 / CIP 105565 / TT01</strain>
    </source>
</reference>
<feature type="chain" id="PRO_0000110917" description="Aspartate--tRNA ligase">
    <location>
        <begin position="1"/>
        <end position="590"/>
    </location>
</feature>
<feature type="region of interest" description="Aspartate" evidence="1">
    <location>
        <begin position="195"/>
        <end position="198"/>
    </location>
</feature>
<feature type="binding site" evidence="1">
    <location>
        <position position="171"/>
    </location>
    <ligand>
        <name>L-aspartate</name>
        <dbReference type="ChEBI" id="CHEBI:29991"/>
    </ligand>
</feature>
<feature type="binding site" evidence="1">
    <location>
        <begin position="217"/>
        <end position="219"/>
    </location>
    <ligand>
        <name>ATP</name>
        <dbReference type="ChEBI" id="CHEBI:30616"/>
    </ligand>
</feature>
<feature type="binding site" evidence="1">
    <location>
        <position position="217"/>
    </location>
    <ligand>
        <name>L-aspartate</name>
        <dbReference type="ChEBI" id="CHEBI:29991"/>
    </ligand>
</feature>
<feature type="binding site" evidence="1">
    <location>
        <position position="226"/>
    </location>
    <ligand>
        <name>ATP</name>
        <dbReference type="ChEBI" id="CHEBI:30616"/>
    </ligand>
</feature>
<feature type="binding site" evidence="1">
    <location>
        <position position="448"/>
    </location>
    <ligand>
        <name>L-aspartate</name>
        <dbReference type="ChEBI" id="CHEBI:29991"/>
    </ligand>
</feature>
<feature type="binding site" evidence="1">
    <location>
        <position position="482"/>
    </location>
    <ligand>
        <name>ATP</name>
        <dbReference type="ChEBI" id="CHEBI:30616"/>
    </ligand>
</feature>
<feature type="binding site" evidence="1">
    <location>
        <position position="489"/>
    </location>
    <ligand>
        <name>L-aspartate</name>
        <dbReference type="ChEBI" id="CHEBI:29991"/>
    </ligand>
</feature>
<feature type="binding site" evidence="1">
    <location>
        <begin position="534"/>
        <end position="537"/>
    </location>
    <ligand>
        <name>ATP</name>
        <dbReference type="ChEBI" id="CHEBI:30616"/>
    </ligand>
</feature>
<keyword id="KW-0030">Aminoacyl-tRNA synthetase</keyword>
<keyword id="KW-0067">ATP-binding</keyword>
<keyword id="KW-0963">Cytoplasm</keyword>
<keyword id="KW-0436">Ligase</keyword>
<keyword id="KW-0547">Nucleotide-binding</keyword>
<keyword id="KW-0648">Protein biosynthesis</keyword>
<keyword id="KW-1185">Reference proteome</keyword>
<gene>
    <name evidence="1" type="primary">aspS</name>
    <name type="ordered locus">plu2107</name>
</gene>